<dbReference type="EMBL" id="AK003666">
    <property type="protein sequence ID" value="BAB22925.1"/>
    <property type="molecule type" value="mRNA"/>
</dbReference>
<dbReference type="EMBL" id="AK010684">
    <property type="protein sequence ID" value="BAB27116.1"/>
    <property type="molecule type" value="mRNA"/>
</dbReference>
<dbReference type="EMBL" id="BC048465">
    <property type="protein sequence ID" value="AAH48465.1"/>
    <property type="molecule type" value="mRNA"/>
</dbReference>
<dbReference type="CCDS" id="CCDS21935.1"/>
<dbReference type="RefSeq" id="NP_079668.2">
    <property type="nucleotide sequence ID" value="NM_025392.2"/>
</dbReference>
<dbReference type="SMR" id="Q9CWI3"/>
<dbReference type="BioGRID" id="211263">
    <property type="interactions" value="21"/>
</dbReference>
<dbReference type="FunCoup" id="Q9CWI3">
    <property type="interactions" value="3202"/>
</dbReference>
<dbReference type="IntAct" id="Q9CWI3">
    <property type="interactions" value="1"/>
</dbReference>
<dbReference type="MINT" id="Q9CWI3"/>
<dbReference type="STRING" id="10090.ENSMUSP00000033282"/>
<dbReference type="GlyGen" id="Q9CWI3">
    <property type="glycosylation" value="1 site, 1 N-linked glycan (1 site)"/>
</dbReference>
<dbReference type="iPTMnet" id="Q9CWI3"/>
<dbReference type="PhosphoSitePlus" id="Q9CWI3"/>
<dbReference type="PaxDb" id="10090-ENSMUSP00000033282"/>
<dbReference type="PeptideAtlas" id="Q9CWI3"/>
<dbReference type="ProteomicsDB" id="273736"/>
<dbReference type="Pumba" id="Q9CWI3"/>
<dbReference type="Antibodypedia" id="32428">
    <property type="antibodies" value="157 antibodies from 28 providers"/>
</dbReference>
<dbReference type="DNASU" id="66165"/>
<dbReference type="Ensembl" id="ENSMUST00000033282.5">
    <property type="protein sequence ID" value="ENSMUSP00000033282.5"/>
    <property type="gene ID" value="ENSMUSG00000030983.5"/>
</dbReference>
<dbReference type="GeneID" id="66165"/>
<dbReference type="KEGG" id="mmu:66165"/>
<dbReference type="UCSC" id="uc009kdi.1">
    <property type="organism name" value="mouse"/>
</dbReference>
<dbReference type="AGR" id="MGI:1913415"/>
<dbReference type="CTD" id="56647"/>
<dbReference type="MGI" id="MGI:1913415">
    <property type="gene designation" value="Bccip"/>
</dbReference>
<dbReference type="VEuPathDB" id="HostDB:ENSMUSG00000030983"/>
<dbReference type="eggNOG" id="KOG3034">
    <property type="taxonomic scope" value="Eukaryota"/>
</dbReference>
<dbReference type="GeneTree" id="ENSGT00390000000696"/>
<dbReference type="HOGENOM" id="CLU_068770_1_1_1"/>
<dbReference type="InParanoid" id="Q9CWI3"/>
<dbReference type="OMA" id="NFTHILG"/>
<dbReference type="OrthoDB" id="27543at2759"/>
<dbReference type="PhylomeDB" id="Q9CWI3"/>
<dbReference type="TreeFam" id="TF320301"/>
<dbReference type="BioGRID-ORCS" id="66165">
    <property type="hits" value="29 hits in 113 CRISPR screens"/>
</dbReference>
<dbReference type="ChiTaRS" id="Bccip">
    <property type="organism name" value="mouse"/>
</dbReference>
<dbReference type="PRO" id="PR:Q9CWI3"/>
<dbReference type="Proteomes" id="UP000000589">
    <property type="component" value="Chromosome 7"/>
</dbReference>
<dbReference type="RNAct" id="Q9CWI3">
    <property type="molecule type" value="protein"/>
</dbReference>
<dbReference type="Bgee" id="ENSMUSG00000030983">
    <property type="expression patterns" value="Expressed in otic placode and 254 other cell types or tissues"/>
</dbReference>
<dbReference type="GO" id="GO:0005814">
    <property type="term" value="C:centriole"/>
    <property type="evidence" value="ECO:0000250"/>
    <property type="project" value="UniProtKB"/>
</dbReference>
<dbReference type="GO" id="GO:0005813">
    <property type="term" value="C:centrosome"/>
    <property type="evidence" value="ECO:0000314"/>
    <property type="project" value="UniProtKB"/>
</dbReference>
<dbReference type="GO" id="GO:0005829">
    <property type="term" value="C:cytosol"/>
    <property type="evidence" value="ECO:0007669"/>
    <property type="project" value="Ensembl"/>
</dbReference>
<dbReference type="GO" id="GO:0097431">
    <property type="term" value="C:mitotic spindle pole"/>
    <property type="evidence" value="ECO:0000314"/>
    <property type="project" value="UniProtKB"/>
</dbReference>
<dbReference type="GO" id="GO:0019908">
    <property type="term" value="C:nuclear cyclin-dependent protein kinase holoenzyme complex"/>
    <property type="evidence" value="ECO:0000266"/>
    <property type="project" value="MGI"/>
</dbReference>
<dbReference type="GO" id="GO:0005654">
    <property type="term" value="C:nucleoplasm"/>
    <property type="evidence" value="ECO:0007669"/>
    <property type="project" value="Ensembl"/>
</dbReference>
<dbReference type="GO" id="GO:0019207">
    <property type="term" value="F:kinase regulator activity"/>
    <property type="evidence" value="ECO:0000266"/>
    <property type="project" value="MGI"/>
</dbReference>
<dbReference type="GO" id="GO:0006974">
    <property type="term" value="P:DNA damage response"/>
    <property type="evidence" value="ECO:0000315"/>
    <property type="project" value="CACAO"/>
</dbReference>
<dbReference type="GO" id="GO:0006281">
    <property type="term" value="P:DNA repair"/>
    <property type="evidence" value="ECO:0007669"/>
    <property type="project" value="UniProtKB-KW"/>
</dbReference>
<dbReference type="GO" id="GO:0034453">
    <property type="term" value="P:microtubule anchoring"/>
    <property type="evidence" value="ECO:0000315"/>
    <property type="project" value="UniProtKB"/>
</dbReference>
<dbReference type="GO" id="GO:0000226">
    <property type="term" value="P:microtubule cytoskeleton organization"/>
    <property type="evidence" value="ECO:0000315"/>
    <property type="project" value="UniProtKB"/>
</dbReference>
<dbReference type="GO" id="GO:0090307">
    <property type="term" value="P:mitotic spindle assembly"/>
    <property type="evidence" value="ECO:0007669"/>
    <property type="project" value="Ensembl"/>
</dbReference>
<dbReference type="GO" id="GO:0007052">
    <property type="term" value="P:mitotic spindle organization"/>
    <property type="evidence" value="ECO:0000315"/>
    <property type="project" value="UniProtKB"/>
</dbReference>
<dbReference type="GO" id="GO:0061101">
    <property type="term" value="P:neuroendocrine cell differentiation"/>
    <property type="evidence" value="ECO:0007669"/>
    <property type="project" value="Ensembl"/>
</dbReference>
<dbReference type="InterPro" id="IPR025602">
    <property type="entry name" value="BCP1_family"/>
</dbReference>
<dbReference type="PANTHER" id="PTHR13261">
    <property type="entry name" value="BRCA2 AND CDKN1A INTERACTING PROTEIN"/>
    <property type="match status" value="1"/>
</dbReference>
<dbReference type="PANTHER" id="PTHR13261:SF0">
    <property type="entry name" value="BRCA2 AND CDKN1A-INTERACTING PROTEIN"/>
    <property type="match status" value="1"/>
</dbReference>
<dbReference type="Pfam" id="PF13862">
    <property type="entry name" value="BCCIP"/>
    <property type="match status" value="1"/>
</dbReference>
<dbReference type="PIRSF" id="PIRSF028983">
    <property type="entry name" value="BCP1"/>
    <property type="match status" value="1"/>
</dbReference>
<comment type="function">
    <text evidence="2 4">During interphase, required for microtubule organizing and anchoring activities. During mitosis, required for the organization and stabilization of the spindle pole (PubMed:28394342). May promote cell cycle arrest by enhancing the inhibition of CDK2 activity by CDKN1A. May be required for repair of DNA damage by homologous recombination in conjunction with BRCA2. May not be involved in non-homologous end joining (NHEJ) (By similarity).</text>
</comment>
<comment type="subunit">
    <text evidence="2">Interacts with BRCA2, CDKN1A and MTDH/LYRIC. Interacts with DCTN1/p150-glued and ACTR1A/ARP1. Interacts with alpha-, beta- and gamma-tubulins. Interacts with TENT5C; the interaction has no effect on TENT5C poly(A) polymerase function (By similarity).</text>
</comment>
<comment type="subcellular location">
    <subcellularLocation>
        <location evidence="2">Nucleus</location>
    </subcellularLocation>
    <subcellularLocation>
        <location evidence="4">Cytoplasm</location>
        <location evidence="4">Cytoskeleton</location>
        <location evidence="4">Microtubule organizing center</location>
        <location evidence="4">Centrosome</location>
        <location evidence="4">Centriole</location>
    </subcellularLocation>
    <subcellularLocation>
        <location evidence="4">Cytoplasm</location>
        <location evidence="4">Cytoskeleton</location>
        <location evidence="4">Spindle pole</location>
    </subcellularLocation>
    <text evidence="2 4">Colocalizes with BRCA2 in discrete nuclear foci (By similarity). In interphase, preferential localizes to the mother centriole (PubMed:28394342). Recruited to the spindle pole matrix and centrosome by microtubules and dynein/dynactin activity (By similarity).</text>
</comment>
<comment type="tissue specificity">
    <text evidence="5">Expressed in the testes (at protein level).</text>
</comment>
<comment type="similarity">
    <text evidence="6">Belongs to the BCP1 family.</text>
</comment>
<name>BCCIP_MOUSE</name>
<protein>
    <recommendedName>
        <fullName>BRCA2 and CDKN1A-interacting protein</fullName>
    </recommendedName>
</protein>
<evidence type="ECO:0000250" key="1"/>
<evidence type="ECO:0000250" key="2">
    <source>
        <dbReference type="UniProtKB" id="Q9P287"/>
    </source>
</evidence>
<evidence type="ECO:0000256" key="3">
    <source>
        <dbReference type="SAM" id="MobiDB-lite"/>
    </source>
</evidence>
<evidence type="ECO:0000269" key="4">
    <source>
    </source>
</evidence>
<evidence type="ECO:0000269" key="5">
    <source>
    </source>
</evidence>
<evidence type="ECO:0000305" key="6"/>
<evidence type="ECO:0007744" key="7">
    <source>
    </source>
</evidence>
<reference key="1">
    <citation type="journal article" date="2005" name="Science">
        <title>The transcriptional landscape of the mammalian genome.</title>
        <authorList>
            <person name="Carninci P."/>
            <person name="Kasukawa T."/>
            <person name="Katayama S."/>
            <person name="Gough J."/>
            <person name="Frith M.C."/>
            <person name="Maeda N."/>
            <person name="Oyama R."/>
            <person name="Ravasi T."/>
            <person name="Lenhard B."/>
            <person name="Wells C."/>
            <person name="Kodzius R."/>
            <person name="Shimokawa K."/>
            <person name="Bajic V.B."/>
            <person name="Brenner S.E."/>
            <person name="Batalov S."/>
            <person name="Forrest A.R."/>
            <person name="Zavolan M."/>
            <person name="Davis M.J."/>
            <person name="Wilming L.G."/>
            <person name="Aidinis V."/>
            <person name="Allen J.E."/>
            <person name="Ambesi-Impiombato A."/>
            <person name="Apweiler R."/>
            <person name="Aturaliya R.N."/>
            <person name="Bailey T.L."/>
            <person name="Bansal M."/>
            <person name="Baxter L."/>
            <person name="Beisel K.W."/>
            <person name="Bersano T."/>
            <person name="Bono H."/>
            <person name="Chalk A.M."/>
            <person name="Chiu K.P."/>
            <person name="Choudhary V."/>
            <person name="Christoffels A."/>
            <person name="Clutterbuck D.R."/>
            <person name="Crowe M.L."/>
            <person name="Dalla E."/>
            <person name="Dalrymple B.P."/>
            <person name="de Bono B."/>
            <person name="Della Gatta G."/>
            <person name="di Bernardo D."/>
            <person name="Down T."/>
            <person name="Engstrom P."/>
            <person name="Fagiolini M."/>
            <person name="Faulkner G."/>
            <person name="Fletcher C.F."/>
            <person name="Fukushima T."/>
            <person name="Furuno M."/>
            <person name="Futaki S."/>
            <person name="Gariboldi M."/>
            <person name="Georgii-Hemming P."/>
            <person name="Gingeras T.R."/>
            <person name="Gojobori T."/>
            <person name="Green R.E."/>
            <person name="Gustincich S."/>
            <person name="Harbers M."/>
            <person name="Hayashi Y."/>
            <person name="Hensch T.K."/>
            <person name="Hirokawa N."/>
            <person name="Hill D."/>
            <person name="Huminiecki L."/>
            <person name="Iacono M."/>
            <person name="Ikeo K."/>
            <person name="Iwama A."/>
            <person name="Ishikawa T."/>
            <person name="Jakt M."/>
            <person name="Kanapin A."/>
            <person name="Katoh M."/>
            <person name="Kawasawa Y."/>
            <person name="Kelso J."/>
            <person name="Kitamura H."/>
            <person name="Kitano H."/>
            <person name="Kollias G."/>
            <person name="Krishnan S.P."/>
            <person name="Kruger A."/>
            <person name="Kummerfeld S.K."/>
            <person name="Kurochkin I.V."/>
            <person name="Lareau L.F."/>
            <person name="Lazarevic D."/>
            <person name="Lipovich L."/>
            <person name="Liu J."/>
            <person name="Liuni S."/>
            <person name="McWilliam S."/>
            <person name="Madan Babu M."/>
            <person name="Madera M."/>
            <person name="Marchionni L."/>
            <person name="Matsuda H."/>
            <person name="Matsuzawa S."/>
            <person name="Miki H."/>
            <person name="Mignone F."/>
            <person name="Miyake S."/>
            <person name="Morris K."/>
            <person name="Mottagui-Tabar S."/>
            <person name="Mulder N."/>
            <person name="Nakano N."/>
            <person name="Nakauchi H."/>
            <person name="Ng P."/>
            <person name="Nilsson R."/>
            <person name="Nishiguchi S."/>
            <person name="Nishikawa S."/>
            <person name="Nori F."/>
            <person name="Ohara O."/>
            <person name="Okazaki Y."/>
            <person name="Orlando V."/>
            <person name="Pang K.C."/>
            <person name="Pavan W.J."/>
            <person name="Pavesi G."/>
            <person name="Pesole G."/>
            <person name="Petrovsky N."/>
            <person name="Piazza S."/>
            <person name="Reed J."/>
            <person name="Reid J.F."/>
            <person name="Ring B.Z."/>
            <person name="Ringwald M."/>
            <person name="Rost B."/>
            <person name="Ruan Y."/>
            <person name="Salzberg S.L."/>
            <person name="Sandelin A."/>
            <person name="Schneider C."/>
            <person name="Schoenbach C."/>
            <person name="Sekiguchi K."/>
            <person name="Semple C.A."/>
            <person name="Seno S."/>
            <person name="Sessa L."/>
            <person name="Sheng Y."/>
            <person name="Shibata Y."/>
            <person name="Shimada H."/>
            <person name="Shimada K."/>
            <person name="Silva D."/>
            <person name="Sinclair B."/>
            <person name="Sperling S."/>
            <person name="Stupka E."/>
            <person name="Sugiura K."/>
            <person name="Sultana R."/>
            <person name="Takenaka Y."/>
            <person name="Taki K."/>
            <person name="Tammoja K."/>
            <person name="Tan S.L."/>
            <person name="Tang S."/>
            <person name="Taylor M.S."/>
            <person name="Tegner J."/>
            <person name="Teichmann S.A."/>
            <person name="Ueda H.R."/>
            <person name="van Nimwegen E."/>
            <person name="Verardo R."/>
            <person name="Wei C.L."/>
            <person name="Yagi K."/>
            <person name="Yamanishi H."/>
            <person name="Zabarovsky E."/>
            <person name="Zhu S."/>
            <person name="Zimmer A."/>
            <person name="Hide W."/>
            <person name="Bult C."/>
            <person name="Grimmond S.M."/>
            <person name="Teasdale R.D."/>
            <person name="Liu E.T."/>
            <person name="Brusic V."/>
            <person name="Quackenbush J."/>
            <person name="Wahlestedt C."/>
            <person name="Mattick J.S."/>
            <person name="Hume D.A."/>
            <person name="Kai C."/>
            <person name="Sasaki D."/>
            <person name="Tomaru Y."/>
            <person name="Fukuda S."/>
            <person name="Kanamori-Katayama M."/>
            <person name="Suzuki M."/>
            <person name="Aoki J."/>
            <person name="Arakawa T."/>
            <person name="Iida J."/>
            <person name="Imamura K."/>
            <person name="Itoh M."/>
            <person name="Kato T."/>
            <person name="Kawaji H."/>
            <person name="Kawagashira N."/>
            <person name="Kawashima T."/>
            <person name="Kojima M."/>
            <person name="Kondo S."/>
            <person name="Konno H."/>
            <person name="Nakano K."/>
            <person name="Ninomiya N."/>
            <person name="Nishio T."/>
            <person name="Okada M."/>
            <person name="Plessy C."/>
            <person name="Shibata K."/>
            <person name="Shiraki T."/>
            <person name="Suzuki S."/>
            <person name="Tagami M."/>
            <person name="Waki K."/>
            <person name="Watahiki A."/>
            <person name="Okamura-Oho Y."/>
            <person name="Suzuki H."/>
            <person name="Kawai J."/>
            <person name="Hayashizaki Y."/>
        </authorList>
    </citation>
    <scope>NUCLEOTIDE SEQUENCE [LARGE SCALE MRNA]</scope>
    <source>
        <strain>C57BL/6J</strain>
        <tissue>Embryo</tissue>
        <tissue>Embryonic stem cell</tissue>
    </source>
</reference>
<reference key="2">
    <citation type="journal article" date="2004" name="Genome Res.">
        <title>The status, quality, and expansion of the NIH full-length cDNA project: the Mammalian Gene Collection (MGC).</title>
        <authorList>
            <consortium name="The MGC Project Team"/>
        </authorList>
    </citation>
    <scope>NUCLEOTIDE SEQUENCE [LARGE SCALE MRNA]</scope>
    <source>
        <tissue>Brain</tissue>
    </source>
</reference>
<reference key="3">
    <citation type="journal article" date="2010" name="Cell">
        <title>A tissue-specific atlas of mouse protein phosphorylation and expression.</title>
        <authorList>
            <person name="Huttlin E.L."/>
            <person name="Jedrychowski M.P."/>
            <person name="Elias J.E."/>
            <person name="Goswami T."/>
            <person name="Rad R."/>
            <person name="Beausoleil S.A."/>
            <person name="Villen J."/>
            <person name="Haas W."/>
            <person name="Sowa M.E."/>
            <person name="Gygi S.P."/>
        </authorList>
    </citation>
    <scope>PHOSPHORYLATION [LARGE SCALE ANALYSIS] AT SER-283</scope>
    <scope>IDENTIFICATION BY MASS SPECTROMETRY [LARGE SCALE ANALYSIS]</scope>
    <source>
        <tissue>Brown adipose tissue</tissue>
        <tissue>Kidney</tissue>
        <tissue>Liver</tissue>
        <tissue>Lung</tissue>
        <tissue>Pancreas</tissue>
        <tissue>Spleen</tissue>
    </source>
</reference>
<reference key="4">
    <citation type="journal article" date="2017" name="Oncogene">
        <title>Regulation of spindle integrity and mitotic fidelity by BCCIP.</title>
        <authorList>
            <person name="Huhn S.C."/>
            <person name="Liu J."/>
            <person name="Ye C."/>
            <person name="Lu H."/>
            <person name="Jiang X."/>
            <person name="Feng X."/>
            <person name="Ganesan S."/>
            <person name="White E."/>
            <person name="Shen Z."/>
        </authorList>
    </citation>
    <scope>FUNCTION</scope>
    <scope>SUBCELLULAR LOCATION</scope>
</reference>
<reference key="5">
    <citation type="journal article" date="2022" name="Front. Cell Dev. Biol.">
        <title>TMPRSS12 Functions in Meiosis and Spermiogenesis and Is Required for Male Fertility in Mice.</title>
        <authorList>
            <person name="Zhang J."/>
            <person name="Zhou X."/>
            <person name="Wan D."/>
            <person name="Yu L."/>
            <person name="Chen X."/>
            <person name="Yan T."/>
            <person name="Wu Z."/>
            <person name="Zheng M."/>
            <person name="Zhu F."/>
            <person name="Zhu H."/>
        </authorList>
    </citation>
    <scope>TISSUE SPECIFICITY</scope>
</reference>
<feature type="chain" id="PRO_0000249688" description="BRCA2 and CDKN1A-interacting protein">
    <location>
        <begin position="1"/>
        <end position="316"/>
    </location>
</feature>
<feature type="region of interest" description="Disordered" evidence="3">
    <location>
        <begin position="1"/>
        <end position="57"/>
    </location>
</feature>
<feature type="region of interest" description="Interaction with BRCA2" evidence="1">
    <location>
        <begin position="61"/>
        <end position="169"/>
    </location>
</feature>
<feature type="region of interest" description="Interaction with CDKN1A" evidence="1">
    <location>
        <begin position="163"/>
        <end position="261"/>
    </location>
</feature>
<feature type="compositionally biased region" description="Acidic residues" evidence="3">
    <location>
        <begin position="25"/>
        <end position="57"/>
    </location>
</feature>
<feature type="modified residue" description="Phosphoserine" evidence="2">
    <location>
        <position position="44"/>
    </location>
</feature>
<feature type="modified residue" description="Phosphoserine" evidence="2">
    <location>
        <position position="114"/>
    </location>
</feature>
<feature type="modified residue" description="Phosphoserine" evidence="7">
    <location>
        <position position="283"/>
    </location>
</feature>
<feature type="sequence conflict" description="In Ref. 1; BAB22925." evidence="6" ref="1">
    <original>L</original>
    <variation>P</variation>
    <location>
        <position position="83"/>
    </location>
</feature>
<feature type="sequence conflict" description="In Ref. 1; BAB22925." evidence="6" ref="1">
    <original>D</original>
    <variation>G</variation>
    <location>
        <position position="301"/>
    </location>
</feature>
<proteinExistence type="evidence at protein level"/>
<gene>
    <name type="primary">Bccip</name>
</gene>
<organism>
    <name type="scientific">Mus musculus</name>
    <name type="common">Mouse</name>
    <dbReference type="NCBI Taxonomy" id="10090"/>
    <lineage>
        <taxon>Eukaryota</taxon>
        <taxon>Metazoa</taxon>
        <taxon>Chordata</taxon>
        <taxon>Craniata</taxon>
        <taxon>Vertebrata</taxon>
        <taxon>Euteleostomi</taxon>
        <taxon>Mammalia</taxon>
        <taxon>Eutheria</taxon>
        <taxon>Euarchontoglires</taxon>
        <taxon>Glires</taxon>
        <taxon>Rodentia</taxon>
        <taxon>Myomorpha</taxon>
        <taxon>Muroidea</taxon>
        <taxon>Muridae</taxon>
        <taxon>Murinae</taxon>
        <taxon>Mus</taxon>
        <taxon>Mus</taxon>
    </lineage>
</organism>
<sequence length="316" mass="35942">MASKAKKRAVGNGIQRPLGAPGQREEEEEEEDEVEDEEEDEDDSDEEEDEVDEIVDEEVNIEFEAYSISDNDYGGIKKLLQQLFLKAPVNTAELTNLLMQQNHIGSVIKQTDVSEDSDDEVDEDEIFGFISLLNLTERKGTQCAEQIKELVLSFCEKTCEQSMVEQLDKLLNDTSKPVGLLLSERFINVPPQIALPMHQQLQKELSEARRTNKPCGKCCFYLLISKTFMEAGKSSSRKRQDSLQQGALMFANAEEEFFYEKAILKFSYSVQGESDTRLGGRWSFDDVPMTPLRTVMVIPDDRMNEIMETLKDHLSV</sequence>
<keyword id="KW-0131">Cell cycle</keyword>
<keyword id="KW-0963">Cytoplasm</keyword>
<keyword id="KW-0206">Cytoskeleton</keyword>
<keyword id="KW-0227">DNA damage</keyword>
<keyword id="KW-0234">DNA repair</keyword>
<keyword id="KW-0539">Nucleus</keyword>
<keyword id="KW-0597">Phosphoprotein</keyword>
<keyword id="KW-1185">Reference proteome</keyword>
<accession>Q9CWI3</accession>
<accession>Q9D1E0</accession>